<comment type="function">
    <text evidence="1">Protein S19 forms a complex with S13 that binds strongly to the 16S ribosomal RNA.</text>
</comment>
<comment type="similarity">
    <text evidence="1">Belongs to the universal ribosomal protein uS19 family.</text>
</comment>
<name>RS19_STAEQ</name>
<gene>
    <name evidence="1" type="primary">rpsS</name>
    <name type="ordered locus">SERP1827</name>
</gene>
<dbReference type="EMBL" id="CP000029">
    <property type="protein sequence ID" value="AAW55159.1"/>
    <property type="molecule type" value="Genomic_DNA"/>
</dbReference>
<dbReference type="RefSeq" id="WP_001829710.1">
    <property type="nucleotide sequence ID" value="NC_002976.3"/>
</dbReference>
<dbReference type="SMR" id="Q5HM03"/>
<dbReference type="STRING" id="176279.SERP1827"/>
<dbReference type="GeneID" id="93780195"/>
<dbReference type="KEGG" id="ser:SERP1827"/>
<dbReference type="eggNOG" id="COG0185">
    <property type="taxonomic scope" value="Bacteria"/>
</dbReference>
<dbReference type="HOGENOM" id="CLU_144911_0_1_9"/>
<dbReference type="Proteomes" id="UP000000531">
    <property type="component" value="Chromosome"/>
</dbReference>
<dbReference type="GO" id="GO:0005737">
    <property type="term" value="C:cytoplasm"/>
    <property type="evidence" value="ECO:0007669"/>
    <property type="project" value="UniProtKB-ARBA"/>
</dbReference>
<dbReference type="GO" id="GO:0015935">
    <property type="term" value="C:small ribosomal subunit"/>
    <property type="evidence" value="ECO:0007669"/>
    <property type="project" value="InterPro"/>
</dbReference>
<dbReference type="GO" id="GO:0019843">
    <property type="term" value="F:rRNA binding"/>
    <property type="evidence" value="ECO:0007669"/>
    <property type="project" value="UniProtKB-UniRule"/>
</dbReference>
<dbReference type="GO" id="GO:0003735">
    <property type="term" value="F:structural constituent of ribosome"/>
    <property type="evidence" value="ECO:0007669"/>
    <property type="project" value="InterPro"/>
</dbReference>
<dbReference type="GO" id="GO:0000028">
    <property type="term" value="P:ribosomal small subunit assembly"/>
    <property type="evidence" value="ECO:0007669"/>
    <property type="project" value="TreeGrafter"/>
</dbReference>
<dbReference type="GO" id="GO:0006412">
    <property type="term" value="P:translation"/>
    <property type="evidence" value="ECO:0007669"/>
    <property type="project" value="UniProtKB-UniRule"/>
</dbReference>
<dbReference type="FunFam" id="3.30.860.10:FF:000001">
    <property type="entry name" value="30S ribosomal protein S19"/>
    <property type="match status" value="1"/>
</dbReference>
<dbReference type="Gene3D" id="3.30.860.10">
    <property type="entry name" value="30s Ribosomal Protein S19, Chain A"/>
    <property type="match status" value="1"/>
</dbReference>
<dbReference type="HAMAP" id="MF_00531">
    <property type="entry name" value="Ribosomal_uS19"/>
    <property type="match status" value="1"/>
</dbReference>
<dbReference type="InterPro" id="IPR002222">
    <property type="entry name" value="Ribosomal_uS19"/>
</dbReference>
<dbReference type="InterPro" id="IPR005732">
    <property type="entry name" value="Ribosomal_uS19_bac-type"/>
</dbReference>
<dbReference type="InterPro" id="IPR020934">
    <property type="entry name" value="Ribosomal_uS19_CS"/>
</dbReference>
<dbReference type="InterPro" id="IPR023575">
    <property type="entry name" value="Ribosomal_uS19_SF"/>
</dbReference>
<dbReference type="NCBIfam" id="TIGR01050">
    <property type="entry name" value="rpsS_bact"/>
    <property type="match status" value="1"/>
</dbReference>
<dbReference type="PANTHER" id="PTHR11880">
    <property type="entry name" value="RIBOSOMAL PROTEIN S19P FAMILY MEMBER"/>
    <property type="match status" value="1"/>
</dbReference>
<dbReference type="PANTHER" id="PTHR11880:SF8">
    <property type="entry name" value="SMALL RIBOSOMAL SUBUNIT PROTEIN US19M"/>
    <property type="match status" value="1"/>
</dbReference>
<dbReference type="Pfam" id="PF00203">
    <property type="entry name" value="Ribosomal_S19"/>
    <property type="match status" value="1"/>
</dbReference>
<dbReference type="PIRSF" id="PIRSF002144">
    <property type="entry name" value="Ribosomal_S19"/>
    <property type="match status" value="1"/>
</dbReference>
<dbReference type="PRINTS" id="PR00975">
    <property type="entry name" value="RIBOSOMALS19"/>
</dbReference>
<dbReference type="SUPFAM" id="SSF54570">
    <property type="entry name" value="Ribosomal protein S19"/>
    <property type="match status" value="1"/>
</dbReference>
<dbReference type="PROSITE" id="PS00323">
    <property type="entry name" value="RIBOSOMAL_S19"/>
    <property type="match status" value="1"/>
</dbReference>
<feature type="chain" id="PRO_0000129906" description="Small ribosomal subunit protein uS19">
    <location>
        <begin position="1"/>
        <end position="92"/>
    </location>
</feature>
<accession>Q5HM03</accession>
<organism>
    <name type="scientific">Staphylococcus epidermidis (strain ATCC 35984 / DSM 28319 / BCRC 17069 / CCUG 31568 / BM 3577 / RP62A)</name>
    <dbReference type="NCBI Taxonomy" id="176279"/>
    <lineage>
        <taxon>Bacteria</taxon>
        <taxon>Bacillati</taxon>
        <taxon>Bacillota</taxon>
        <taxon>Bacilli</taxon>
        <taxon>Bacillales</taxon>
        <taxon>Staphylococcaceae</taxon>
        <taxon>Staphylococcus</taxon>
    </lineage>
</organism>
<proteinExistence type="inferred from homology"/>
<keyword id="KW-1185">Reference proteome</keyword>
<keyword id="KW-0687">Ribonucleoprotein</keyword>
<keyword id="KW-0689">Ribosomal protein</keyword>
<keyword id="KW-0694">RNA-binding</keyword>
<keyword id="KW-0699">rRNA-binding</keyword>
<evidence type="ECO:0000255" key="1">
    <source>
        <dbReference type="HAMAP-Rule" id="MF_00531"/>
    </source>
</evidence>
<evidence type="ECO:0000305" key="2"/>
<reference key="1">
    <citation type="journal article" date="2005" name="J. Bacteriol.">
        <title>Insights on evolution of virulence and resistance from the complete genome analysis of an early methicillin-resistant Staphylococcus aureus strain and a biofilm-producing methicillin-resistant Staphylococcus epidermidis strain.</title>
        <authorList>
            <person name="Gill S.R."/>
            <person name="Fouts D.E."/>
            <person name="Archer G.L."/>
            <person name="Mongodin E.F."/>
            <person name="DeBoy R.T."/>
            <person name="Ravel J."/>
            <person name="Paulsen I.T."/>
            <person name="Kolonay J.F."/>
            <person name="Brinkac L.M."/>
            <person name="Beanan M.J."/>
            <person name="Dodson R.J."/>
            <person name="Daugherty S.C."/>
            <person name="Madupu R."/>
            <person name="Angiuoli S.V."/>
            <person name="Durkin A.S."/>
            <person name="Haft D.H."/>
            <person name="Vamathevan J.J."/>
            <person name="Khouri H."/>
            <person name="Utterback T.R."/>
            <person name="Lee C."/>
            <person name="Dimitrov G."/>
            <person name="Jiang L."/>
            <person name="Qin H."/>
            <person name="Weidman J."/>
            <person name="Tran K."/>
            <person name="Kang K.H."/>
            <person name="Hance I.R."/>
            <person name="Nelson K.E."/>
            <person name="Fraser C.M."/>
        </authorList>
    </citation>
    <scope>NUCLEOTIDE SEQUENCE [LARGE SCALE GENOMIC DNA]</scope>
    <source>
        <strain>ATCC 35984 / DSM 28319 / BCRC 17069 / CCUG 31568 / BM 3577 / RP62A</strain>
    </source>
</reference>
<protein>
    <recommendedName>
        <fullName evidence="1">Small ribosomal subunit protein uS19</fullName>
    </recommendedName>
    <alternativeName>
        <fullName evidence="2">30S ribosomal protein S19</fullName>
    </alternativeName>
</protein>
<sequence>MARSIKKGPFVDDHLMKKVEAQDGSEKKQVIKTWSRRSTIFPNFIGHTFAVYDGRKHVPVYVTEDMVGHKLGEFAPTRTFKGHAADDKKTRR</sequence>